<keyword id="KW-1003">Cell membrane</keyword>
<keyword id="KW-0961">Cell wall biogenesis/degradation</keyword>
<keyword id="KW-0325">Glycoprotein</keyword>
<keyword id="KW-0472">Membrane</keyword>
<keyword id="KW-1185">Reference proteome</keyword>
<keyword id="KW-0812">Transmembrane</keyword>
<keyword id="KW-1133">Transmembrane helix</keyword>
<accession>P0DI44</accession>
<evidence type="ECO:0000250" key="1"/>
<evidence type="ECO:0000255" key="2"/>
<evidence type="ECO:0000305" key="3"/>
<proteinExistence type="evidence at transcript level"/>
<comment type="function">
    <text evidence="1">Regulates membrane-cell wall junctions and localized cell wall deposition. Required for establishment of the Casparian strip membrane domain (CSD) and the subsequent formation of Casparian strips, a cell wall modification of the root endodermis that determines an apoplastic barrier between the intraorganismal apoplasm and the extraorganismal apoplasm and prevents lateral diffusion (By similarity).</text>
</comment>
<comment type="subunit">
    <text evidence="1">Homodimer and heterodimers.</text>
</comment>
<comment type="subcellular location">
    <subcellularLocation>
        <location evidence="1">Cell membrane</location>
        <topology evidence="1">Multi-pass membrane protein</topology>
    </subcellularLocation>
    <text evidence="1">Very restricted localization following a belt shape within the plasma membrane which coincides with the position of the Casparian strip membrane domain in the root endodermis.</text>
</comment>
<comment type="similarity">
    <text evidence="3">Belongs to the Casparian strip membrane proteins (CASP) family.</text>
</comment>
<dbReference type="EMBL" id="BM404341">
    <property type="status" value="NOT_ANNOTATED_CDS"/>
    <property type="molecule type" value="mRNA"/>
</dbReference>
<dbReference type="SMR" id="P0DI44"/>
<dbReference type="FunCoup" id="P0DI44">
    <property type="interactions" value="2"/>
</dbReference>
<dbReference type="STRING" id="4113.P0DI44"/>
<dbReference type="PaxDb" id="4113-PGSC0003DMT400064736"/>
<dbReference type="eggNOG" id="ENOG502RXTK">
    <property type="taxonomic scope" value="Eukaryota"/>
</dbReference>
<dbReference type="InParanoid" id="P0DI44"/>
<dbReference type="Proteomes" id="UP000011115">
    <property type="component" value="Unassembled WGS sequence"/>
</dbReference>
<dbReference type="GO" id="GO:0005886">
    <property type="term" value="C:plasma membrane"/>
    <property type="evidence" value="ECO:0000318"/>
    <property type="project" value="GO_Central"/>
</dbReference>
<dbReference type="GO" id="GO:0042545">
    <property type="term" value="P:cell wall modification"/>
    <property type="evidence" value="ECO:0000318"/>
    <property type="project" value="GO_Central"/>
</dbReference>
<dbReference type="GO" id="GO:0007043">
    <property type="term" value="P:cell-cell junction assembly"/>
    <property type="evidence" value="ECO:0000318"/>
    <property type="project" value="GO_Central"/>
</dbReference>
<dbReference type="InterPro" id="IPR006459">
    <property type="entry name" value="CASP/CASPL"/>
</dbReference>
<dbReference type="InterPro" id="IPR006702">
    <property type="entry name" value="CASP_dom"/>
</dbReference>
<dbReference type="InterPro" id="IPR044173">
    <property type="entry name" value="CASPL"/>
</dbReference>
<dbReference type="NCBIfam" id="TIGR01569">
    <property type="entry name" value="A_tha_TIGR01569"/>
    <property type="match status" value="1"/>
</dbReference>
<dbReference type="PANTHER" id="PTHR36488:SF12">
    <property type="entry name" value="CASP-LIKE PROTEIN"/>
    <property type="match status" value="1"/>
</dbReference>
<dbReference type="PANTHER" id="PTHR36488">
    <property type="entry name" value="CASP-LIKE PROTEIN 1U1"/>
    <property type="match status" value="1"/>
</dbReference>
<dbReference type="Pfam" id="PF04535">
    <property type="entry name" value="CASP_dom"/>
    <property type="match status" value="1"/>
</dbReference>
<reference key="1">
    <citation type="submission" date="2002-01" db="EMBL/GenBank/DDBJ databases">
        <title>Generation of ESTs from potato roots.</title>
        <authorList>
            <person name="van der Hoeven R."/>
            <person name="Sun H."/>
            <person name="Karamycheva S.A."/>
            <person name="Tsai J."/>
            <person name="Van Aken S."/>
            <person name="Utterback T."/>
            <person name="Chiemingo A."/>
            <person name="Bougri O."/>
            <person name="Buell C.R."/>
            <person name="Ronning C."/>
            <person name="Tanksley S."/>
            <person name="Baker B."/>
        </authorList>
    </citation>
    <scope>NUCLEOTIDE SEQUENCE [LARGE SCALE MRNA]</scope>
    <source>
        <strain>cv. Kennebec</strain>
        <tissue>Root</tissue>
    </source>
</reference>
<reference key="2">
    <citation type="journal article" date="2014" name="Plant Physiol.">
        <title>Functional and evolutionary analysis of the CASPARIAN STRIP MEMBRANE DOMAIN PROTEIN family.</title>
        <authorList>
            <person name="Roppolo D."/>
            <person name="Boeckmann B."/>
            <person name="Pfister A."/>
            <person name="Boutet E."/>
            <person name="Rubio M.C."/>
            <person name="Denervaud-Tendon V."/>
            <person name="Vermeer J.E."/>
            <person name="Gheyselinck J."/>
            <person name="Xenarios I."/>
            <person name="Geldner N."/>
        </authorList>
    </citation>
    <scope>GENE FAMILY</scope>
    <scope>NOMENCLATURE</scope>
</reference>
<sequence length="188" mass="20272">MKAGALELGHASKTTKSGVNRGMSILDLFIRIIAIIATLGSAIAMGTTNETLPFFTQFVRFKAKYSDLPTFTFFVVANAIVSAYLVLSLGLSIYHIMRSRAQATRIALIFFDAAMLGLLTGGASASAAIVYLAHKGNRKTNWFPICQQYDSFCHRTSGSLVGSFAGSVLIILLIFLSAIALSRQSLNH</sequence>
<organism>
    <name type="scientific">Solanum tuberosum</name>
    <name type="common">Potato</name>
    <dbReference type="NCBI Taxonomy" id="4113"/>
    <lineage>
        <taxon>Eukaryota</taxon>
        <taxon>Viridiplantae</taxon>
        <taxon>Streptophyta</taxon>
        <taxon>Embryophyta</taxon>
        <taxon>Tracheophyta</taxon>
        <taxon>Spermatophyta</taxon>
        <taxon>Magnoliopsida</taxon>
        <taxon>eudicotyledons</taxon>
        <taxon>Gunneridae</taxon>
        <taxon>Pentapetalae</taxon>
        <taxon>asterids</taxon>
        <taxon>lamiids</taxon>
        <taxon>Solanales</taxon>
        <taxon>Solanaceae</taxon>
        <taxon>Solanoideae</taxon>
        <taxon>Solaneae</taxon>
        <taxon>Solanum</taxon>
    </lineage>
</organism>
<feature type="chain" id="PRO_0000417806" description="Casparian strip membrane protein 1">
    <location>
        <begin position="1"/>
        <end position="188"/>
    </location>
</feature>
<feature type="topological domain" description="Cytoplasmic" evidence="2">
    <location>
        <begin position="1"/>
        <end position="24"/>
    </location>
</feature>
<feature type="transmembrane region" description="Helical" evidence="2">
    <location>
        <begin position="25"/>
        <end position="45"/>
    </location>
</feature>
<feature type="topological domain" description="Extracellular" evidence="2">
    <location>
        <begin position="46"/>
        <end position="72"/>
    </location>
</feature>
<feature type="transmembrane region" description="Helical" evidence="2">
    <location>
        <begin position="73"/>
        <end position="93"/>
    </location>
</feature>
<feature type="topological domain" description="Cytoplasmic" evidence="2">
    <location>
        <begin position="94"/>
        <end position="105"/>
    </location>
</feature>
<feature type="transmembrane region" description="Helical" evidence="2">
    <location>
        <begin position="106"/>
        <end position="126"/>
    </location>
</feature>
<feature type="topological domain" description="Extracellular" evidence="2">
    <location>
        <begin position="127"/>
        <end position="159"/>
    </location>
</feature>
<feature type="transmembrane region" description="Helical" evidence="2">
    <location>
        <begin position="160"/>
        <end position="180"/>
    </location>
</feature>
<feature type="topological domain" description="Cytoplasmic" evidence="2">
    <location>
        <begin position="181"/>
        <end position="188"/>
    </location>
</feature>
<feature type="glycosylation site" description="N-linked (GlcNAc...) asparagine" evidence="2">
    <location>
        <position position="49"/>
    </location>
</feature>
<protein>
    <recommendedName>
        <fullName>Casparian strip membrane protein 1</fullName>
        <shortName>StCASP1</shortName>
    </recommendedName>
</protein>
<name>CASP1_SOLTU</name>